<dbReference type="EMBL" id="BA000036">
    <property type="protein sequence ID" value="BAB99736.1"/>
    <property type="molecule type" value="Genomic_DNA"/>
</dbReference>
<dbReference type="EMBL" id="BX927155">
    <property type="protein sequence ID" value="CAF21008.1"/>
    <property type="molecule type" value="Genomic_DNA"/>
</dbReference>
<dbReference type="RefSeq" id="NP_601544.1">
    <property type="nucleotide sequence ID" value="NC_003450.3"/>
</dbReference>
<dbReference type="RefSeq" id="WP_003859343.1">
    <property type="nucleotide sequence ID" value="NC_006958.1"/>
</dbReference>
<dbReference type="SMR" id="Q8NN66"/>
<dbReference type="STRING" id="196627.cg2573"/>
<dbReference type="GeneID" id="1020294"/>
<dbReference type="KEGG" id="cgb:cg2573"/>
<dbReference type="KEGG" id="cgl:Cgl2343"/>
<dbReference type="PATRIC" id="fig|196627.13.peg.2279"/>
<dbReference type="eggNOG" id="COG0268">
    <property type="taxonomic scope" value="Bacteria"/>
</dbReference>
<dbReference type="HOGENOM" id="CLU_160655_0_1_11"/>
<dbReference type="OrthoDB" id="9807974at2"/>
<dbReference type="BioCyc" id="CORYNE:G18NG-11940-MONOMER"/>
<dbReference type="Proteomes" id="UP000000582">
    <property type="component" value="Chromosome"/>
</dbReference>
<dbReference type="Proteomes" id="UP000001009">
    <property type="component" value="Chromosome"/>
</dbReference>
<dbReference type="GO" id="GO:0005829">
    <property type="term" value="C:cytosol"/>
    <property type="evidence" value="ECO:0007669"/>
    <property type="project" value="TreeGrafter"/>
</dbReference>
<dbReference type="GO" id="GO:0015935">
    <property type="term" value="C:small ribosomal subunit"/>
    <property type="evidence" value="ECO:0007669"/>
    <property type="project" value="TreeGrafter"/>
</dbReference>
<dbReference type="GO" id="GO:0070181">
    <property type="term" value="F:small ribosomal subunit rRNA binding"/>
    <property type="evidence" value="ECO:0007669"/>
    <property type="project" value="TreeGrafter"/>
</dbReference>
<dbReference type="GO" id="GO:0003735">
    <property type="term" value="F:structural constituent of ribosome"/>
    <property type="evidence" value="ECO:0007669"/>
    <property type="project" value="InterPro"/>
</dbReference>
<dbReference type="GO" id="GO:0006412">
    <property type="term" value="P:translation"/>
    <property type="evidence" value="ECO:0007669"/>
    <property type="project" value="UniProtKB-UniRule"/>
</dbReference>
<dbReference type="FunFam" id="1.20.58.110:FF:000001">
    <property type="entry name" value="30S ribosomal protein S20"/>
    <property type="match status" value="1"/>
</dbReference>
<dbReference type="Gene3D" id="1.20.58.110">
    <property type="entry name" value="Ribosomal protein S20"/>
    <property type="match status" value="1"/>
</dbReference>
<dbReference type="HAMAP" id="MF_00500">
    <property type="entry name" value="Ribosomal_bS20"/>
    <property type="match status" value="1"/>
</dbReference>
<dbReference type="InterPro" id="IPR002583">
    <property type="entry name" value="Ribosomal_bS20"/>
</dbReference>
<dbReference type="InterPro" id="IPR036510">
    <property type="entry name" value="Ribosomal_bS20_sf"/>
</dbReference>
<dbReference type="NCBIfam" id="TIGR00029">
    <property type="entry name" value="S20"/>
    <property type="match status" value="1"/>
</dbReference>
<dbReference type="PANTHER" id="PTHR33398">
    <property type="entry name" value="30S RIBOSOMAL PROTEIN S20"/>
    <property type="match status" value="1"/>
</dbReference>
<dbReference type="PANTHER" id="PTHR33398:SF1">
    <property type="entry name" value="SMALL RIBOSOMAL SUBUNIT PROTEIN BS20C"/>
    <property type="match status" value="1"/>
</dbReference>
<dbReference type="Pfam" id="PF01649">
    <property type="entry name" value="Ribosomal_S20p"/>
    <property type="match status" value="1"/>
</dbReference>
<dbReference type="SUPFAM" id="SSF46992">
    <property type="entry name" value="Ribosomal protein S20"/>
    <property type="match status" value="1"/>
</dbReference>
<gene>
    <name evidence="1" type="primary">rpsT</name>
    <name type="ordered locus">Cgl2343</name>
    <name type="ordered locus">cg2573</name>
</gene>
<keyword id="KW-1185">Reference proteome</keyword>
<keyword id="KW-0687">Ribonucleoprotein</keyword>
<keyword id="KW-0689">Ribosomal protein</keyword>
<keyword id="KW-0694">RNA-binding</keyword>
<keyword id="KW-0699">rRNA-binding</keyword>
<organism>
    <name type="scientific">Corynebacterium glutamicum (strain ATCC 13032 / DSM 20300 / JCM 1318 / BCRC 11384 / CCUG 27702 / LMG 3730 / NBRC 12168 / NCIMB 10025 / NRRL B-2784 / 534)</name>
    <dbReference type="NCBI Taxonomy" id="196627"/>
    <lineage>
        <taxon>Bacteria</taxon>
        <taxon>Bacillati</taxon>
        <taxon>Actinomycetota</taxon>
        <taxon>Actinomycetes</taxon>
        <taxon>Mycobacteriales</taxon>
        <taxon>Corynebacteriaceae</taxon>
        <taxon>Corynebacterium</taxon>
    </lineage>
</organism>
<accession>Q8NN66</accession>
<feature type="chain" id="PRO_0000167953" description="Small ribosomal subunit protein bS20">
    <location>
        <begin position="1"/>
        <end position="87"/>
    </location>
</feature>
<feature type="region of interest" description="Disordered" evidence="2">
    <location>
        <begin position="1"/>
        <end position="22"/>
    </location>
</feature>
<comment type="function">
    <text evidence="1">Binds directly to 16S ribosomal RNA.</text>
</comment>
<comment type="similarity">
    <text evidence="1">Belongs to the bacterial ribosomal protein bS20 family.</text>
</comment>
<reference key="1">
    <citation type="journal article" date="2003" name="Appl. Microbiol. Biotechnol.">
        <title>The Corynebacterium glutamicum genome: features and impacts on biotechnological processes.</title>
        <authorList>
            <person name="Ikeda M."/>
            <person name="Nakagawa S."/>
        </authorList>
    </citation>
    <scope>NUCLEOTIDE SEQUENCE [LARGE SCALE GENOMIC DNA]</scope>
    <source>
        <strain>ATCC 13032 / DSM 20300 / JCM 1318 / BCRC 11384 / CCUG 27702 / LMG 3730 / NBRC 12168 / NCIMB 10025 / NRRL B-2784 / 534</strain>
    </source>
</reference>
<reference key="2">
    <citation type="journal article" date="2003" name="J. Biotechnol.">
        <title>The complete Corynebacterium glutamicum ATCC 13032 genome sequence and its impact on the production of L-aspartate-derived amino acids and vitamins.</title>
        <authorList>
            <person name="Kalinowski J."/>
            <person name="Bathe B."/>
            <person name="Bartels D."/>
            <person name="Bischoff N."/>
            <person name="Bott M."/>
            <person name="Burkovski A."/>
            <person name="Dusch N."/>
            <person name="Eggeling L."/>
            <person name="Eikmanns B.J."/>
            <person name="Gaigalat L."/>
            <person name="Goesmann A."/>
            <person name="Hartmann M."/>
            <person name="Huthmacher K."/>
            <person name="Kraemer R."/>
            <person name="Linke B."/>
            <person name="McHardy A.C."/>
            <person name="Meyer F."/>
            <person name="Moeckel B."/>
            <person name="Pfefferle W."/>
            <person name="Puehler A."/>
            <person name="Rey D.A."/>
            <person name="Rueckert C."/>
            <person name="Rupp O."/>
            <person name="Sahm H."/>
            <person name="Wendisch V.F."/>
            <person name="Wiegraebe I."/>
            <person name="Tauch A."/>
        </authorList>
    </citation>
    <scope>NUCLEOTIDE SEQUENCE [LARGE SCALE GENOMIC DNA]</scope>
    <source>
        <strain>ATCC 13032 / DSM 20300 / JCM 1318 / BCRC 11384 / CCUG 27702 / LMG 3730 / NBRC 12168 / NCIMB 10025 / NRRL B-2784 / 534</strain>
    </source>
</reference>
<protein>
    <recommendedName>
        <fullName evidence="1">Small ribosomal subunit protein bS20</fullName>
    </recommendedName>
    <alternativeName>
        <fullName evidence="3">30S ribosomal protein S20</fullName>
    </alternativeName>
</protein>
<sequence>MANIKSQIKRNKTNEKARLRNQAVRSAVRTEIRKFNAAIEAGDKDAAQAQLRTASRALDKAVTKGVFHINNAANKKSNMATAFNKLG</sequence>
<name>RS20_CORGL</name>
<proteinExistence type="inferred from homology"/>
<evidence type="ECO:0000255" key="1">
    <source>
        <dbReference type="HAMAP-Rule" id="MF_00500"/>
    </source>
</evidence>
<evidence type="ECO:0000256" key="2">
    <source>
        <dbReference type="SAM" id="MobiDB-lite"/>
    </source>
</evidence>
<evidence type="ECO:0000305" key="3"/>